<gene>
    <name evidence="5" type="primary">treB</name>
    <name type="ORF">AN5635</name>
</gene>
<keyword id="KW-0106">Calcium</keyword>
<keyword id="KW-0963">Cytoplasm</keyword>
<keyword id="KW-0326">Glycosidase</keyword>
<keyword id="KW-0378">Hydrolase</keyword>
<keyword id="KW-0479">Metal-binding</keyword>
<keyword id="KW-1185">Reference proteome</keyword>
<organism>
    <name type="scientific">Emericella nidulans (strain FGSC A4 / ATCC 38163 / CBS 112.46 / NRRL 194 / M139)</name>
    <name type="common">Aspergillus nidulans</name>
    <dbReference type="NCBI Taxonomy" id="227321"/>
    <lineage>
        <taxon>Eukaryota</taxon>
        <taxon>Fungi</taxon>
        <taxon>Dikarya</taxon>
        <taxon>Ascomycota</taxon>
        <taxon>Pezizomycotina</taxon>
        <taxon>Eurotiomycetes</taxon>
        <taxon>Eurotiomycetidae</taxon>
        <taxon>Eurotiales</taxon>
        <taxon>Aspergillaceae</taxon>
        <taxon>Aspergillus</taxon>
        <taxon>Aspergillus subgen. Nidulantes</taxon>
    </lineage>
</organism>
<name>TREB_EMENI</name>
<protein>
    <recommendedName>
        <fullName>Cytosolic neutral trehalase</fullName>
        <ecNumber evidence="7">3.2.1.28</ecNumber>
    </recommendedName>
    <alternativeName>
        <fullName>Alpha,alpha-trehalase</fullName>
    </alternativeName>
    <alternativeName>
        <fullName>Alpha,alpha-trehalose glucohydrolase</fullName>
    </alternativeName>
</protein>
<proteinExistence type="evidence at protein level"/>
<comment type="function">
    <text evidence="4 7">Hydrolyzes intracellular trehalose to glucose (Probable). The disaccharide trehalose serves as a storage carbohydrate that is mobilized during conidial germination (PubMed:10320571). Regulates the level of trehalose as a protectant for cell integrity during heat stress (PubMed:10320571).</text>
</comment>
<comment type="catalytic activity">
    <reaction evidence="7">
        <text>alpha,alpha-trehalose + H2O = alpha-D-glucose + beta-D-glucose</text>
        <dbReference type="Rhea" id="RHEA:32675"/>
        <dbReference type="ChEBI" id="CHEBI:15377"/>
        <dbReference type="ChEBI" id="CHEBI:15903"/>
        <dbReference type="ChEBI" id="CHEBI:16551"/>
        <dbReference type="ChEBI" id="CHEBI:17925"/>
        <dbReference type="EC" id="3.2.1.28"/>
    </reaction>
</comment>
<comment type="cofactor">
    <cofactor evidence="2">
        <name>Ca(2+)</name>
        <dbReference type="ChEBI" id="CHEBI:29108"/>
    </cofactor>
</comment>
<comment type="activity regulation">
    <text evidence="2">Activated by calcium.</text>
</comment>
<comment type="pathway">
    <text evidence="6">Carbohydrate degradation.</text>
</comment>
<comment type="subcellular location">
    <subcellularLocation>
        <location evidence="2">Cytoplasm</location>
    </subcellularLocation>
</comment>
<comment type="developmental stage">
    <text evidence="4">Expressed during spore germination and growth.</text>
</comment>
<comment type="induction">
    <text evidence="4">Induced during recovery from thermal stress.</text>
</comment>
<comment type="disruption phenotype">
    <text evidence="4">Abolishes trehalose degradation during conidial germination and delays germ tube formation (PubMed:10320571). Resistance to thermal stress (PubMed:10320571).</text>
</comment>
<comment type="similarity">
    <text evidence="6">Belongs to the glycosyl hydrolase 37 family.</text>
</comment>
<comment type="sequence caution" evidence="6">
    <conflict type="erroneous gene model prediction">
        <sequence resource="EMBL-CDS" id="AAB99831"/>
    </conflict>
</comment>
<comment type="sequence caution" evidence="6">
    <conflict type="erroneous gene model prediction">
        <sequence resource="EMBL-CDS" id="EAA62728"/>
    </conflict>
</comment>
<reference key="1">
    <citation type="journal article" date="1999" name="Mol. Microbiol.">
        <title>Neutral trehalases catalyse intracellular trehalose breakdown in the filamentous fungi Aspergillus nidulans and Neurospora crassa.</title>
        <authorList>
            <person name="d'Enfert C."/>
            <person name="Bonini B.M."/>
            <person name="Zapella P.D.A."/>
            <person name="Fontaine T."/>
            <person name="da Silva A.M."/>
            <person name="Terenzi H.F."/>
        </authorList>
    </citation>
    <scope>NUCLEOTIDE SEQUENCE [GENOMIC DNA]</scope>
    <scope>FUNCTION</scope>
    <scope>CATALYTIC ACTIVITY</scope>
    <scope>DEVELOPMENTAL STAGE</scope>
    <scope>INDUCTION</scope>
    <scope>DISRUPTION PHENOTYPE</scope>
</reference>
<reference key="2">
    <citation type="journal article" date="2005" name="Nature">
        <title>Sequencing of Aspergillus nidulans and comparative analysis with A. fumigatus and A. oryzae.</title>
        <authorList>
            <person name="Galagan J.E."/>
            <person name="Calvo S.E."/>
            <person name="Cuomo C."/>
            <person name="Ma L.-J."/>
            <person name="Wortman J.R."/>
            <person name="Batzoglou S."/>
            <person name="Lee S.-I."/>
            <person name="Bastuerkmen M."/>
            <person name="Spevak C.C."/>
            <person name="Clutterbuck J."/>
            <person name="Kapitonov V."/>
            <person name="Jurka J."/>
            <person name="Scazzocchio C."/>
            <person name="Farman M.L."/>
            <person name="Butler J."/>
            <person name="Purcell S."/>
            <person name="Harris S."/>
            <person name="Braus G.H."/>
            <person name="Draht O."/>
            <person name="Busch S."/>
            <person name="D'Enfert C."/>
            <person name="Bouchier C."/>
            <person name="Goldman G.H."/>
            <person name="Bell-Pedersen D."/>
            <person name="Griffiths-Jones S."/>
            <person name="Doonan J.H."/>
            <person name="Yu J."/>
            <person name="Vienken K."/>
            <person name="Pain A."/>
            <person name="Freitag M."/>
            <person name="Selker E.U."/>
            <person name="Archer D.B."/>
            <person name="Penalva M.A."/>
            <person name="Oakley B.R."/>
            <person name="Momany M."/>
            <person name="Tanaka T."/>
            <person name="Kumagai T."/>
            <person name="Asai K."/>
            <person name="Machida M."/>
            <person name="Nierman W.C."/>
            <person name="Denning D.W."/>
            <person name="Caddick M.X."/>
            <person name="Hynes M."/>
            <person name="Paoletti M."/>
            <person name="Fischer R."/>
            <person name="Miller B.L."/>
            <person name="Dyer P.S."/>
            <person name="Sachs M.S."/>
            <person name="Osmani S.A."/>
            <person name="Birren B.W."/>
        </authorList>
    </citation>
    <scope>NUCLEOTIDE SEQUENCE [LARGE SCALE GENOMIC DNA]</scope>
    <source>
        <strain>FGSC A4 / ATCC 38163 / CBS 112.46 / NRRL 194 / M139</strain>
    </source>
</reference>
<reference key="3">
    <citation type="journal article" date="2009" name="Fungal Genet. Biol.">
        <title>The 2008 update of the Aspergillus nidulans genome annotation: a community effort.</title>
        <authorList>
            <person name="Wortman J.R."/>
            <person name="Gilsenan J.M."/>
            <person name="Joardar V."/>
            <person name="Deegan J."/>
            <person name="Clutterbuck J."/>
            <person name="Andersen M.R."/>
            <person name="Archer D."/>
            <person name="Bencina M."/>
            <person name="Braus G."/>
            <person name="Coutinho P."/>
            <person name="von Dohren H."/>
            <person name="Doonan J."/>
            <person name="Driessen A.J."/>
            <person name="Durek P."/>
            <person name="Espeso E."/>
            <person name="Fekete E."/>
            <person name="Flipphi M."/>
            <person name="Estrada C.G."/>
            <person name="Geysens S."/>
            <person name="Goldman G."/>
            <person name="de Groot P.W."/>
            <person name="Hansen K."/>
            <person name="Harris S.D."/>
            <person name="Heinekamp T."/>
            <person name="Helmstaedt K."/>
            <person name="Henrissat B."/>
            <person name="Hofmann G."/>
            <person name="Homan T."/>
            <person name="Horio T."/>
            <person name="Horiuchi H."/>
            <person name="James S."/>
            <person name="Jones M."/>
            <person name="Karaffa L."/>
            <person name="Karanyi Z."/>
            <person name="Kato M."/>
            <person name="Keller N."/>
            <person name="Kelly D.E."/>
            <person name="Kiel J.A."/>
            <person name="Kim J.M."/>
            <person name="van der Klei I.J."/>
            <person name="Klis F.M."/>
            <person name="Kovalchuk A."/>
            <person name="Krasevec N."/>
            <person name="Kubicek C.P."/>
            <person name="Liu B."/>
            <person name="Maccabe A."/>
            <person name="Meyer V."/>
            <person name="Mirabito P."/>
            <person name="Miskei M."/>
            <person name="Mos M."/>
            <person name="Mullins J."/>
            <person name="Nelson D.R."/>
            <person name="Nielsen J."/>
            <person name="Oakley B.R."/>
            <person name="Osmani S.A."/>
            <person name="Pakula T."/>
            <person name="Paszewski A."/>
            <person name="Paulsen I."/>
            <person name="Pilsyk S."/>
            <person name="Pocsi I."/>
            <person name="Punt P.J."/>
            <person name="Ram A.F."/>
            <person name="Ren Q."/>
            <person name="Robellet X."/>
            <person name="Robson G."/>
            <person name="Seiboth B."/>
            <person name="van Solingen P."/>
            <person name="Specht T."/>
            <person name="Sun J."/>
            <person name="Taheri-Talesh N."/>
            <person name="Takeshita N."/>
            <person name="Ussery D."/>
            <person name="vanKuyk P.A."/>
            <person name="Visser H."/>
            <person name="van de Vondervoort P.J."/>
            <person name="de Vries R.P."/>
            <person name="Walton J."/>
            <person name="Xiang X."/>
            <person name="Xiong Y."/>
            <person name="Zeng A.P."/>
            <person name="Brandt B.W."/>
            <person name="Cornell M.J."/>
            <person name="van den Hondel C.A."/>
            <person name="Visser J."/>
            <person name="Oliver S.G."/>
            <person name="Turner G."/>
        </authorList>
    </citation>
    <scope>GENOME REANNOTATION</scope>
    <source>
        <strain>FGSC A4 / ATCC 38163 / CBS 112.46 / NRRL 194 / M139</strain>
    </source>
</reference>
<evidence type="ECO:0000250" key="1">
    <source>
        <dbReference type="UniProtKB" id="P13482"/>
    </source>
</evidence>
<evidence type="ECO:0000250" key="2">
    <source>
        <dbReference type="UniProtKB" id="P32356"/>
    </source>
</evidence>
<evidence type="ECO:0000256" key="3">
    <source>
        <dbReference type="SAM" id="MobiDB-lite"/>
    </source>
</evidence>
<evidence type="ECO:0000269" key="4">
    <source>
    </source>
</evidence>
<evidence type="ECO:0000303" key="5">
    <source>
    </source>
</evidence>
<evidence type="ECO:0000305" key="6"/>
<evidence type="ECO:0000305" key="7">
    <source>
    </source>
</evidence>
<dbReference type="EC" id="3.2.1.28" evidence="7"/>
<dbReference type="EMBL" id="AF043229">
    <property type="protein sequence ID" value="AAB99831.1"/>
    <property type="status" value="ALT_SEQ"/>
    <property type="molecule type" value="Genomic_DNA"/>
</dbReference>
<dbReference type="EMBL" id="AACD01000098">
    <property type="protein sequence ID" value="EAA62728.1"/>
    <property type="status" value="ALT_SEQ"/>
    <property type="molecule type" value="Genomic_DNA"/>
</dbReference>
<dbReference type="EMBL" id="BN001305">
    <property type="protein sequence ID" value="CBF81508.1"/>
    <property type="molecule type" value="Genomic_DNA"/>
</dbReference>
<dbReference type="RefSeq" id="XP_663239.1">
    <property type="nucleotide sequence ID" value="XM_658147.1"/>
</dbReference>
<dbReference type="SMR" id="O42777"/>
<dbReference type="FunCoup" id="O42777">
    <property type="interactions" value="305"/>
</dbReference>
<dbReference type="STRING" id="227321.O42777"/>
<dbReference type="CAZy" id="GH37">
    <property type="family name" value="Glycoside Hydrolase Family 37"/>
</dbReference>
<dbReference type="EnsemblFungi" id="CBF81508">
    <property type="protein sequence ID" value="CBF81508"/>
    <property type="gene ID" value="ANIA_05635"/>
</dbReference>
<dbReference type="VEuPathDB" id="FungiDB:AN5635"/>
<dbReference type="eggNOG" id="KOG0602">
    <property type="taxonomic scope" value="Eukaryota"/>
</dbReference>
<dbReference type="HOGENOM" id="CLU_006451_1_1_1"/>
<dbReference type="InParanoid" id="O42777"/>
<dbReference type="OMA" id="WLFMMTK"/>
<dbReference type="OrthoDB" id="3542292at2759"/>
<dbReference type="BRENDA" id="3.2.1.28">
    <property type="organism ID" value="517"/>
</dbReference>
<dbReference type="Proteomes" id="UP000000560">
    <property type="component" value="Chromosome V"/>
</dbReference>
<dbReference type="GO" id="GO:0005946">
    <property type="term" value="C:alpha,alpha-trehalose-phosphate synthase complex (UDP-forming)"/>
    <property type="evidence" value="ECO:0007669"/>
    <property type="project" value="EnsemblFungi"/>
</dbReference>
<dbReference type="GO" id="GO:0004555">
    <property type="term" value="F:alpha,alpha-trehalase activity"/>
    <property type="evidence" value="ECO:0000318"/>
    <property type="project" value="GO_Central"/>
</dbReference>
<dbReference type="GO" id="GO:0005509">
    <property type="term" value="F:calcium ion binding"/>
    <property type="evidence" value="ECO:0007669"/>
    <property type="project" value="EnsemblFungi"/>
</dbReference>
<dbReference type="GO" id="GO:0015927">
    <property type="term" value="F:trehalase activity"/>
    <property type="evidence" value="ECO:0000315"/>
    <property type="project" value="AspGD"/>
</dbReference>
<dbReference type="GO" id="GO:0030437">
    <property type="term" value="P:ascospore formation"/>
    <property type="evidence" value="ECO:0007669"/>
    <property type="project" value="EnsemblFungi"/>
</dbReference>
<dbReference type="GO" id="GO:0034605">
    <property type="term" value="P:cellular response to heat"/>
    <property type="evidence" value="ECO:0000315"/>
    <property type="project" value="AspGD"/>
</dbReference>
<dbReference type="GO" id="GO:0009267">
    <property type="term" value="P:cellular response to starvation"/>
    <property type="evidence" value="ECO:0000315"/>
    <property type="project" value="AspGD"/>
</dbReference>
<dbReference type="GO" id="GO:0005993">
    <property type="term" value="P:trehalose catabolic process"/>
    <property type="evidence" value="ECO:0000315"/>
    <property type="project" value="UniProtKB"/>
</dbReference>
<dbReference type="FunFam" id="1.50.10.10:FF:000026">
    <property type="entry name" value="Trehalase"/>
    <property type="match status" value="1"/>
</dbReference>
<dbReference type="Gene3D" id="1.50.10.10">
    <property type="match status" value="1"/>
</dbReference>
<dbReference type="InterPro" id="IPR008928">
    <property type="entry name" value="6-hairpin_glycosidase_sf"/>
</dbReference>
<dbReference type="InterPro" id="IPR012341">
    <property type="entry name" value="6hp_glycosidase-like_sf"/>
</dbReference>
<dbReference type="InterPro" id="IPR001661">
    <property type="entry name" value="Glyco_hydro_37"/>
</dbReference>
<dbReference type="InterPro" id="IPR018232">
    <property type="entry name" value="Glyco_hydro_37_CS"/>
</dbReference>
<dbReference type="InterPro" id="IPR011120">
    <property type="entry name" value="Trehalase_Ca-bd"/>
</dbReference>
<dbReference type="PANTHER" id="PTHR23403:SF6">
    <property type="entry name" value="CYTOSOLIC NEUTRAL TREHALASE-RELATED"/>
    <property type="match status" value="1"/>
</dbReference>
<dbReference type="PANTHER" id="PTHR23403">
    <property type="entry name" value="TREHALASE"/>
    <property type="match status" value="1"/>
</dbReference>
<dbReference type="Pfam" id="PF01204">
    <property type="entry name" value="Trehalase"/>
    <property type="match status" value="1"/>
</dbReference>
<dbReference type="Pfam" id="PF07492">
    <property type="entry name" value="Trehalase_Ca-bi"/>
    <property type="match status" value="1"/>
</dbReference>
<dbReference type="PRINTS" id="PR00744">
    <property type="entry name" value="GLHYDRLASE37"/>
</dbReference>
<dbReference type="SUPFAM" id="SSF48208">
    <property type="entry name" value="Six-hairpin glycosidases"/>
    <property type="match status" value="1"/>
</dbReference>
<dbReference type="PROSITE" id="PS00927">
    <property type="entry name" value="TREHALASE_1"/>
    <property type="match status" value="1"/>
</dbReference>
<dbReference type="PROSITE" id="PS00928">
    <property type="entry name" value="TREHALASE_2"/>
    <property type="match status" value="1"/>
</dbReference>
<accession>O42777</accession>
<accession>C8VFW3</accession>
<accession>Q5B1E5</accession>
<feature type="chain" id="PRO_0000173793" description="Cytosolic neutral trehalase">
    <location>
        <begin position="1"/>
        <end position="751"/>
    </location>
</feature>
<feature type="region of interest" description="Disordered" evidence="3">
    <location>
        <begin position="1"/>
        <end position="42"/>
    </location>
</feature>
<feature type="region of interest" description="Disordered" evidence="3">
    <location>
        <begin position="64"/>
        <end position="88"/>
    </location>
</feature>
<feature type="compositionally biased region" description="Polar residues" evidence="3">
    <location>
        <begin position="1"/>
        <end position="15"/>
    </location>
</feature>
<feature type="compositionally biased region" description="Basic and acidic residues" evidence="3">
    <location>
        <begin position="64"/>
        <end position="78"/>
    </location>
</feature>
<feature type="active site" description="Proton donor/acceptor" evidence="2">
    <location>
        <position position="466"/>
    </location>
</feature>
<feature type="active site" description="Proton donor/acceptor" evidence="2">
    <location>
        <position position="670"/>
    </location>
</feature>
<feature type="binding site" evidence="2">
    <location>
        <position position="105"/>
    </location>
    <ligand>
        <name>Ca(2+)</name>
        <dbReference type="ChEBI" id="CHEBI:29108"/>
    </ligand>
</feature>
<feature type="binding site" evidence="2">
    <location>
        <position position="107"/>
    </location>
    <ligand>
        <name>Ca(2+)</name>
        <dbReference type="ChEBI" id="CHEBI:29108"/>
    </ligand>
</feature>
<feature type="binding site" evidence="2">
    <location>
        <position position="109"/>
    </location>
    <ligand>
        <name>Ca(2+)</name>
        <dbReference type="ChEBI" id="CHEBI:29108"/>
    </ligand>
</feature>
<feature type="binding site" evidence="2">
    <location>
        <position position="111"/>
    </location>
    <ligand>
        <name>Ca(2+)</name>
        <dbReference type="ChEBI" id="CHEBI:29108"/>
    </ligand>
</feature>
<feature type="binding site" evidence="2">
    <location>
        <position position="116"/>
    </location>
    <ligand>
        <name>Ca(2+)</name>
        <dbReference type="ChEBI" id="CHEBI:29108"/>
    </ligand>
</feature>
<feature type="binding site" evidence="1">
    <location>
        <position position="292"/>
    </location>
    <ligand>
        <name>substrate</name>
    </ligand>
</feature>
<feature type="binding site" evidence="2">
    <location>
        <begin position="299"/>
        <end position="300"/>
    </location>
    <ligand>
        <name>substrate</name>
    </ligand>
</feature>
<feature type="binding site" evidence="2">
    <location>
        <position position="336"/>
    </location>
    <ligand>
        <name>substrate</name>
    </ligand>
</feature>
<feature type="binding site" evidence="2">
    <location>
        <begin position="345"/>
        <end position="347"/>
    </location>
    <ligand>
        <name>substrate</name>
    </ligand>
</feature>
<feature type="binding site" evidence="2">
    <location>
        <position position="412"/>
    </location>
    <ligand>
        <name>substrate</name>
    </ligand>
</feature>
<feature type="binding site" evidence="2">
    <location>
        <position position="461"/>
    </location>
    <ligand>
        <name>substrate</name>
    </ligand>
</feature>
<feature type="binding site" evidence="2">
    <location>
        <position position="464"/>
    </location>
    <ligand>
        <name>substrate</name>
    </ligand>
</feature>
<sequence length="751" mass="86425">MDDSALPSNTSNGINGRTAHRRSSSGGDPFQHPDIYYGNPESVERIKNRRRAFSSSLKSFNRQDFHEMLGDRNTRRGSMDPTSGNPRKFLIDVDATLHSLLEREDSDRNMQITIEDVGPKVFSLGTAASHGYNRFDVRGTYMLSNLLQELTIAKDYGRKQIVLDEERLSENPVSRLSRLIKNSFWNSLTRRIDGRNIEVAGRDPKDWTDDPRPRIYVPPGAPEQLEYYRRIAEEKPELRLDVQELAAEITPEYVRDLNEKPGLLALAMEEKYDEKTGKTDFAGVPFVVPGGRFNELYGWDSYMESLGLLASNRVDLAKAMVINFCFCIKHYGKILNANRSYYLTRSQPPFLTDMALRVYDRIQNEPGAMDFLRHAILAAIKEYYSVWMAEPRLDPVSGLSRYRSPGIGVPPETEASHFLHLLTPYAEKHGMEFKEFVQAYNYGKVKEPELDEYFMHDRAVRESGHDTSYRLERVCGNLATVDLNSLLYKYEVDIARVIRVYFKDKLEIPVEFRTPATKDIQSESSSVWDRRARRRKMRMDTYLWDEEKGMYFDYDTVKQERTNYESATTLWAMWAGLVTPRQASAMITKALPRFEEFGGIVSGTEESRGAVGLNRPTRQWDYPYGWAPQQMLAWTGFARYGYQEEAERLAYKWLYMITKAFVDFNGVVVEKYDVTRPIDPHRVDAEYGNQGVDFKGAPREGFGWVNASYVYGLEMLNAHQRRALGAVTPWETYSKAVSAQGSDTVLENRSE</sequence>